<sequence length="567" mass="64177">MEKIVLLLAIVSLVKSDQICIGYHANNSTEQVDTIMEKNVTVTHAQDILEKTHNGKLCDLDGVKPLILRDCSVAGWLLGNPMCDEFINVPEWSYIVEKANPANDLCYPGDFNDYEELKHLLSRINHFEKIQIIPKSSWSNHEASSGVSSACPYNGKSSFFRNVVWLIKKDNAYPTIKRSYNNTNQEDLLILWGIHHPNDAAEQTKLYQNPTTYISVGTSTLNQRLVPKIATRSKVNGQSGRMEFFWTILKPNDAINFESNGNFIAPEYAYKIVKKGDSAIMKSELEYGNCNTKCQTPMGAINSSMPFHNIHPLTIGECPKYVKSNRLVLATGLRNTPQRERRRKKRGLFGAIAGFIEGGWQGMVDGWYGYHHSNEQGSGYAADKESTQKAIDGVTNKVNSIINKMNTQFEAVGREFNNLERRIENLNKKMEDGFLDVWTYNAELLVLMENERTLDFHDSNVKNLYDKVRLQLRDNAKELGNGCFEFYHKCDNECMESVKNGTYDYPQYSEEARLNREEISGVKLESMGTYQILSIYSTVASSLALAIMVAGLSLWMCSNGSLQCRIC</sequence>
<keyword id="KW-1167">Clathrin- and caveolin-independent endocytosis of virus by host</keyword>
<keyword id="KW-1165">Clathrin-mediated endocytosis of virus by host</keyword>
<keyword id="KW-1015">Disulfide bond</keyword>
<keyword id="KW-1170">Fusion of virus membrane with host endosomal membrane</keyword>
<keyword id="KW-1168">Fusion of virus membrane with host membrane</keyword>
<keyword id="KW-0325">Glycoprotein</keyword>
<keyword id="KW-0348">Hemagglutinin</keyword>
<keyword id="KW-1032">Host cell membrane</keyword>
<keyword id="KW-1043">Host membrane</keyword>
<keyword id="KW-0945">Host-virus interaction</keyword>
<keyword id="KW-0449">Lipoprotein</keyword>
<keyword id="KW-0472">Membrane</keyword>
<keyword id="KW-0564">Palmitate</keyword>
<keyword id="KW-0732">Signal</keyword>
<keyword id="KW-0812">Transmembrane</keyword>
<keyword id="KW-1133">Transmembrane helix</keyword>
<keyword id="KW-1161">Viral attachment to host cell</keyword>
<keyword id="KW-0261">Viral envelope protein</keyword>
<keyword id="KW-1162">Viral penetration into host cytoplasm</keyword>
<keyword id="KW-0946">Virion</keyword>
<keyword id="KW-1164">Virus endocytosis by host</keyword>
<keyword id="KW-1160">Virus entry into host cell</keyword>
<proteinExistence type="inferred from homology"/>
<comment type="function">
    <text evidence="1">Binds to sialic acid-containing receptors on the cell surface, bringing about the attachment of the virus particle to the cell. This attachment induces virion internalization either through clathrin-dependent endocytosis or through clathrin- and caveolin-independent pathway. Plays a major role in the determination of host range restriction and virulence. Class I viral fusion protein. Responsible for penetration of the virus into the cell cytoplasm by mediating the fusion of the membrane of the endocytosed virus particle with the endosomal membrane. Low pH in endosomes induces an irreversible conformational change in HA2, releasing the fusion hydrophobic peptide. Several trimers are required to form a competent fusion pore.</text>
</comment>
<comment type="subunit">
    <text evidence="1">Homotrimer of disulfide-linked HA1-HA2.</text>
</comment>
<comment type="subcellular location">
    <subcellularLocation>
        <location evidence="1">Virion membrane</location>
        <topology evidence="1">Single-pass type I membrane protein</topology>
    </subcellularLocation>
    <subcellularLocation>
        <location evidence="1">Host apical cell membrane</location>
        <topology evidence="1">Single-pass type I membrane protein</topology>
    </subcellularLocation>
    <text evidence="1">Targeted to the apical plasma membrane in epithelial polarized cells through a signal present in the transmembrane domain. Associated with glycosphingolipid- and cholesterol-enriched detergent-resistant lipid rafts.</text>
</comment>
<comment type="PTM">
    <text evidence="1">Palmitoylated.</text>
</comment>
<comment type="PTM">
    <text evidence="1">In natural infection, inactive HA is matured into HA1 and HA2 outside the cell by one or more trypsin-like, arginine-specific endoprotease secreted by the bronchial epithelial cells. One identified protease that may be involved in this process is secreted in lungs by club cells.</text>
</comment>
<comment type="miscellaneous">
    <text>Major glycoprotein, comprises over 80% of the envelope proteins present in virus particle.</text>
</comment>
<comment type="miscellaneous">
    <text>The extent of infection into host organism is determined by HA. Influenza viruses bud from the apical surface of polarized epithelial cells (e.g. bronchial epithelial cells) into lumen of lungs and are therefore usually pneumotropic. The reason is that HA is cleaved by tryptase clara which is restricted to lungs. However, HAs of H5 and H7 pantropic avian viruses subtypes can be cleaved by furin and subtilisin-type enzymes, allowing the virus to grow in other organs than lungs.</text>
</comment>
<comment type="miscellaneous">
    <text>The influenza A genome consist of 8 RNA segments. Genetic variation of hemagglutinin and/or neuraminidase genes results in the emergence of new influenza strains. The mechanism of variation can be the result of point mutations or the result of genetic reassortment between segments of two different strains.</text>
</comment>
<comment type="similarity">
    <text evidence="1">Belongs to the influenza viruses hemagglutinin family.</text>
</comment>
<reference key="1">
    <citation type="journal article" date="2004" name="Nature">
        <title>Genesis of a highly pathogenic and potentially pandemic H5N1 influenza virus in eastern Asia.</title>
        <authorList>
            <person name="Li K.S."/>
            <person name="Guan Y."/>
            <person name="Wang J."/>
            <person name="Smith G.J.D."/>
            <person name="Xu K.M."/>
            <person name="Duan L."/>
            <person name="Rahardjo A.P."/>
            <person name="Puthavathana P."/>
            <person name="Buranathai C."/>
            <person name="Nguyen T.D."/>
            <person name="Estoepangestie A.T.S."/>
            <person name="Chaisingh A."/>
            <person name="Auewarakul P."/>
            <person name="Long H.T."/>
            <person name="Hanh N.T.H."/>
            <person name="Webby R.J."/>
            <person name="Poon L.L.M."/>
            <person name="Chen H."/>
            <person name="Shortridge K.F."/>
            <person name="Yuen K.Y."/>
            <person name="Webster R.G."/>
            <person name="Peiris J.S.M."/>
        </authorList>
    </citation>
    <scope>NUCLEOTIDE SEQUENCE [GENOMIC RNA]</scope>
</reference>
<organismHost>
    <name type="scientific">Aves</name>
    <dbReference type="NCBI Taxonomy" id="8782"/>
</organismHost>
<organismHost>
    <name type="scientific">Felis catus</name>
    <name type="common">Cat</name>
    <name type="synonym">Felis silvestris catus</name>
    <dbReference type="NCBI Taxonomy" id="9685"/>
</organismHost>
<organismHost>
    <name type="scientific">Homo sapiens</name>
    <name type="common">Human</name>
    <dbReference type="NCBI Taxonomy" id="9606"/>
</organismHost>
<organismHost>
    <name type="scientific">Panthera pardus</name>
    <name type="common">Leopard</name>
    <name type="synonym">Felis pardus</name>
    <dbReference type="NCBI Taxonomy" id="9691"/>
</organismHost>
<organismHost>
    <name type="scientific">Panthera tigris</name>
    <name type="common">Tiger</name>
    <dbReference type="NCBI Taxonomy" id="9694"/>
</organismHost>
<organismHost>
    <name type="scientific">Sus scrofa</name>
    <name type="common">Pig</name>
    <dbReference type="NCBI Taxonomy" id="9823"/>
</organismHost>
<accession>Q6DQ19</accession>
<organism>
    <name type="scientific">Influenza A virus (strain A/Silky Chicken/Hong Kong/YU100/2002 H5N1 genotype X3)</name>
    <dbReference type="NCBI Taxonomy" id="284214"/>
    <lineage>
        <taxon>Viruses</taxon>
        <taxon>Riboviria</taxon>
        <taxon>Orthornavirae</taxon>
        <taxon>Negarnaviricota</taxon>
        <taxon>Polyploviricotina</taxon>
        <taxon>Insthoviricetes</taxon>
        <taxon>Articulavirales</taxon>
        <taxon>Orthomyxoviridae</taxon>
        <taxon>Alphainfluenzavirus</taxon>
        <taxon>Alphainfluenzavirus influenzae</taxon>
        <taxon>Influenza A virus</taxon>
    </lineage>
</organism>
<protein>
    <recommendedName>
        <fullName evidence="1">Hemagglutinin</fullName>
    </recommendedName>
    <component>
        <recommendedName>
            <fullName evidence="1">Hemagglutinin HA1 chain</fullName>
        </recommendedName>
    </component>
    <component>
        <recommendedName>
            <fullName evidence="1">Hemagglutinin HA2 chain</fullName>
        </recommendedName>
    </component>
</protein>
<evidence type="ECO:0000255" key="1">
    <source>
        <dbReference type="HAMAP-Rule" id="MF_04072"/>
    </source>
</evidence>
<gene>
    <name evidence="1" type="primary">HA</name>
</gene>
<feature type="signal peptide" evidence="1">
    <location>
        <begin position="1"/>
        <end position="16"/>
    </location>
</feature>
<feature type="chain" id="PRO_0000440817" description="Hemagglutinin" evidence="1">
    <location>
        <begin position="17"/>
        <end position="567"/>
    </location>
</feature>
<feature type="chain" id="PRO_0000440818" description="Hemagglutinin HA1 chain" evidence="1">
    <location>
        <begin position="17"/>
        <end position="346"/>
    </location>
</feature>
<feature type="chain" id="PRO_0000440819" description="Hemagglutinin HA2 chain" evidence="1">
    <location>
        <begin position="347"/>
        <end position="567"/>
    </location>
</feature>
<feature type="topological domain" description="Extracellular" evidence="1">
    <location>
        <begin position="17"/>
        <end position="531"/>
    </location>
</feature>
<feature type="transmembrane region" description="Helical" evidence="1">
    <location>
        <begin position="532"/>
        <end position="552"/>
    </location>
</feature>
<feature type="topological domain" description="Cytoplasmic" evidence="1">
    <location>
        <begin position="553"/>
        <end position="567"/>
    </location>
</feature>
<feature type="site" description="Cleavage; by host" evidence="1">
    <location>
        <begin position="346"/>
        <end position="347"/>
    </location>
</feature>
<feature type="lipid moiety-binding region" description="S-palmitoyl cysteine; by host" evidence="1">
    <location>
        <position position="557"/>
    </location>
</feature>
<feature type="lipid moiety-binding region" description="S-palmitoyl cysteine; by host" evidence="1">
    <location>
        <position position="564"/>
    </location>
</feature>
<feature type="lipid moiety-binding region" description="S-palmitoyl cysteine; by host" evidence="1">
    <location>
        <position position="567"/>
    </location>
</feature>
<feature type="glycosylation site" description="N-linked (GlcNAc...) asparagine; by host" evidence="1">
    <location>
        <position position="26"/>
    </location>
</feature>
<feature type="glycosylation site" description="N-linked (GlcNAc...) asparagine; by host" evidence="1">
    <location>
        <position position="27"/>
    </location>
</feature>
<feature type="glycosylation site" description="N-linked (GlcNAc...) asparagine; by host" evidence="1">
    <location>
        <position position="39"/>
    </location>
</feature>
<feature type="glycosylation site" description="N-linked (GlcNAc...) asparagine; by host" evidence="1">
    <location>
        <position position="181"/>
    </location>
</feature>
<feature type="glycosylation site" description="N-linked (GlcNAc...) asparagine; by host" evidence="1">
    <location>
        <position position="302"/>
    </location>
</feature>
<feature type="glycosylation site" description="N-linked (GlcNAc...) asparagine; by host" evidence="1">
    <location>
        <position position="500"/>
    </location>
</feature>
<feature type="disulfide bond" description="Interchain (between HA1 and HA2 chains)" evidence="1">
    <location>
        <begin position="20"/>
        <end position="483"/>
    </location>
</feature>
<feature type="disulfide bond" evidence="1">
    <location>
        <begin position="58"/>
        <end position="290"/>
    </location>
</feature>
<feature type="disulfide bond" evidence="1">
    <location>
        <begin position="71"/>
        <end position="83"/>
    </location>
</feature>
<feature type="disulfide bond" evidence="1">
    <location>
        <begin position="106"/>
        <end position="151"/>
    </location>
</feature>
<feature type="disulfide bond" evidence="1">
    <location>
        <begin position="294"/>
        <end position="318"/>
    </location>
</feature>
<feature type="disulfide bond" evidence="1">
    <location>
        <begin position="490"/>
        <end position="494"/>
    </location>
</feature>
<feature type="non-terminal residue">
    <location>
        <position position="567"/>
    </location>
</feature>
<dbReference type="EMBL" id="AY651348">
    <property type="protein sequence ID" value="AAT73288.1"/>
    <property type="molecule type" value="Genomic_RNA"/>
</dbReference>
<dbReference type="SMR" id="Q6DQ19"/>
<dbReference type="GlyCosmos" id="Q6DQ19">
    <property type="glycosylation" value="6 sites, No reported glycans"/>
</dbReference>
<dbReference type="GO" id="GO:0020002">
    <property type="term" value="C:host cell plasma membrane"/>
    <property type="evidence" value="ECO:0007669"/>
    <property type="project" value="UniProtKB-SubCell"/>
</dbReference>
<dbReference type="GO" id="GO:0016020">
    <property type="term" value="C:membrane"/>
    <property type="evidence" value="ECO:0007669"/>
    <property type="project" value="UniProtKB-KW"/>
</dbReference>
<dbReference type="GO" id="GO:0019031">
    <property type="term" value="C:viral envelope"/>
    <property type="evidence" value="ECO:0007669"/>
    <property type="project" value="UniProtKB-KW"/>
</dbReference>
<dbReference type="GO" id="GO:0055036">
    <property type="term" value="C:virion membrane"/>
    <property type="evidence" value="ECO:0007669"/>
    <property type="project" value="UniProtKB-SubCell"/>
</dbReference>
<dbReference type="GO" id="GO:0046789">
    <property type="term" value="F:host cell surface receptor binding"/>
    <property type="evidence" value="ECO:0007669"/>
    <property type="project" value="InterPro"/>
</dbReference>
<dbReference type="GO" id="GO:0075512">
    <property type="term" value="P:clathrin-dependent endocytosis of virus by host cell"/>
    <property type="evidence" value="ECO:0007669"/>
    <property type="project" value="UniProtKB-KW"/>
</dbReference>
<dbReference type="GO" id="GO:0039654">
    <property type="term" value="P:fusion of virus membrane with host endosome membrane"/>
    <property type="evidence" value="ECO:0007669"/>
    <property type="project" value="UniProtKB-KW"/>
</dbReference>
<dbReference type="GO" id="GO:0019064">
    <property type="term" value="P:fusion of virus membrane with host plasma membrane"/>
    <property type="evidence" value="ECO:0007669"/>
    <property type="project" value="InterPro"/>
</dbReference>
<dbReference type="GO" id="GO:0019062">
    <property type="term" value="P:virion attachment to host cell"/>
    <property type="evidence" value="ECO:0007669"/>
    <property type="project" value="UniProtKB-KW"/>
</dbReference>
<dbReference type="FunFam" id="3.90.209.20:FF:000001">
    <property type="entry name" value="Hemagglutinin"/>
    <property type="match status" value="1"/>
</dbReference>
<dbReference type="Gene3D" id="3.90.20.10">
    <property type="match status" value="1"/>
</dbReference>
<dbReference type="Gene3D" id="3.90.209.20">
    <property type="match status" value="1"/>
</dbReference>
<dbReference type="Gene3D" id="2.10.77.10">
    <property type="entry name" value="Hemagglutinin Chain A, Domain 2"/>
    <property type="match status" value="1"/>
</dbReference>
<dbReference type="HAMAP" id="MF_04072">
    <property type="entry name" value="INFV_HEMA"/>
    <property type="match status" value="1"/>
</dbReference>
<dbReference type="InterPro" id="IPR008980">
    <property type="entry name" value="Capsid_hemagglutn"/>
</dbReference>
<dbReference type="InterPro" id="IPR013828">
    <property type="entry name" value="Hemagglutn_HA1_a/b_dom_sf"/>
</dbReference>
<dbReference type="InterPro" id="IPR000149">
    <property type="entry name" value="Hemagglutn_influenz_A"/>
</dbReference>
<dbReference type="InterPro" id="IPR001364">
    <property type="entry name" value="Hemagglutn_influenz_A/B"/>
</dbReference>
<dbReference type="Pfam" id="PF00509">
    <property type="entry name" value="Hemagglutinin"/>
    <property type="match status" value="1"/>
</dbReference>
<dbReference type="PRINTS" id="PR00330">
    <property type="entry name" value="HEMAGGLUTN1"/>
</dbReference>
<dbReference type="PRINTS" id="PR00329">
    <property type="entry name" value="HEMAGGLUTN12"/>
</dbReference>
<dbReference type="SUPFAM" id="SSF58064">
    <property type="entry name" value="Influenza hemagglutinin (stalk)"/>
    <property type="match status" value="1"/>
</dbReference>
<dbReference type="SUPFAM" id="SSF49818">
    <property type="entry name" value="Viral protein domain"/>
    <property type="match status" value="1"/>
</dbReference>
<name>HEMA_I02A4</name>